<feature type="chain" id="PRO_0000336886" description="7-cyano-7-deazaguanine synthase">
    <location>
        <begin position="1"/>
        <end position="235"/>
    </location>
</feature>
<feature type="binding site" evidence="1">
    <location>
        <begin position="16"/>
        <end position="26"/>
    </location>
    <ligand>
        <name>ATP</name>
        <dbReference type="ChEBI" id="CHEBI:30616"/>
    </ligand>
</feature>
<feature type="binding site" evidence="1">
    <location>
        <position position="193"/>
    </location>
    <ligand>
        <name>Zn(2+)</name>
        <dbReference type="ChEBI" id="CHEBI:29105"/>
    </ligand>
</feature>
<feature type="binding site" evidence="1">
    <location>
        <position position="201"/>
    </location>
    <ligand>
        <name>Zn(2+)</name>
        <dbReference type="ChEBI" id="CHEBI:29105"/>
    </ligand>
</feature>
<feature type="binding site" evidence="1">
    <location>
        <position position="204"/>
    </location>
    <ligand>
        <name>Zn(2+)</name>
        <dbReference type="ChEBI" id="CHEBI:29105"/>
    </ligand>
</feature>
<feature type="binding site" evidence="1">
    <location>
        <position position="207"/>
    </location>
    <ligand>
        <name>Zn(2+)</name>
        <dbReference type="ChEBI" id="CHEBI:29105"/>
    </ligand>
</feature>
<gene>
    <name evidence="1" type="primary">queC</name>
    <name type="ordered locus">Asuc_2017</name>
</gene>
<protein>
    <recommendedName>
        <fullName evidence="1">7-cyano-7-deazaguanine synthase</fullName>
        <ecNumber evidence="1">6.3.4.20</ecNumber>
    </recommendedName>
    <alternativeName>
        <fullName evidence="1">7-cyano-7-carbaguanine synthase</fullName>
    </alternativeName>
    <alternativeName>
        <fullName evidence="1">PreQ(0) synthase</fullName>
    </alternativeName>
    <alternativeName>
        <fullName evidence="1">Queuosine biosynthesis protein QueC</fullName>
    </alternativeName>
</protein>
<comment type="function">
    <text evidence="1">Catalyzes the ATP-dependent conversion of 7-carboxy-7-deazaguanine (CDG) to 7-cyano-7-deazaguanine (preQ(0)).</text>
</comment>
<comment type="catalytic activity">
    <reaction evidence="1">
        <text>7-carboxy-7-deazaguanine + NH4(+) + ATP = 7-cyano-7-deazaguanine + ADP + phosphate + H2O + H(+)</text>
        <dbReference type="Rhea" id="RHEA:27982"/>
        <dbReference type="ChEBI" id="CHEBI:15377"/>
        <dbReference type="ChEBI" id="CHEBI:15378"/>
        <dbReference type="ChEBI" id="CHEBI:28938"/>
        <dbReference type="ChEBI" id="CHEBI:30616"/>
        <dbReference type="ChEBI" id="CHEBI:43474"/>
        <dbReference type="ChEBI" id="CHEBI:45075"/>
        <dbReference type="ChEBI" id="CHEBI:61036"/>
        <dbReference type="ChEBI" id="CHEBI:456216"/>
        <dbReference type="EC" id="6.3.4.20"/>
    </reaction>
</comment>
<comment type="cofactor">
    <cofactor evidence="1">
        <name>Zn(2+)</name>
        <dbReference type="ChEBI" id="CHEBI:29105"/>
    </cofactor>
    <text evidence="1">Binds 1 zinc ion per subunit.</text>
</comment>
<comment type="pathway">
    <text evidence="1">Purine metabolism; 7-cyano-7-deazaguanine biosynthesis.</text>
</comment>
<comment type="similarity">
    <text evidence="1">Belongs to the QueC family.</text>
</comment>
<keyword id="KW-0067">ATP-binding</keyword>
<keyword id="KW-0436">Ligase</keyword>
<keyword id="KW-0479">Metal-binding</keyword>
<keyword id="KW-0547">Nucleotide-binding</keyword>
<keyword id="KW-0671">Queuosine biosynthesis</keyword>
<keyword id="KW-1185">Reference proteome</keyword>
<keyword id="KW-0862">Zinc</keyword>
<reference key="1">
    <citation type="journal article" date="2010" name="BMC Genomics">
        <title>A genomic perspective on the potential of Actinobacillus succinogenes for industrial succinate production.</title>
        <authorList>
            <person name="McKinlay J.B."/>
            <person name="Laivenieks M."/>
            <person name="Schindler B.D."/>
            <person name="McKinlay A.A."/>
            <person name="Siddaramappa S."/>
            <person name="Challacombe J.F."/>
            <person name="Lowry S.R."/>
            <person name="Clum A."/>
            <person name="Lapidus A.L."/>
            <person name="Burkhart K.B."/>
            <person name="Harkins V."/>
            <person name="Vieille C."/>
        </authorList>
    </citation>
    <scope>NUCLEOTIDE SEQUENCE [LARGE SCALE GENOMIC DNA]</scope>
    <source>
        <strain>ATCC 55618 / DSM 22257 / CCUG 43843 / 130Z</strain>
    </source>
</reference>
<evidence type="ECO:0000255" key="1">
    <source>
        <dbReference type="HAMAP-Rule" id="MF_01633"/>
    </source>
</evidence>
<name>QUEC_ACTSZ</name>
<sequence length="235" mass="25953">MNISNPNGNRKAVVIFSGGQDSTTCLLQAIRDYGPNNVEAVTFQYGQRHAIELQKAQWIAQDLGVKQTLIDTSVIKTITTNAMMSDAQIKQDENGMPNTFVDGRNALFLLYAAIYAKGQGITDIITGVCETDFSGYPDCRNVFIKSMNVTLNLAMDYQFNIRTPLMYLTKAQTWQLADELGALDYVRQYTHTCYLGVEGGCGTCPSCLLREKGLKQYLAQKSAVEKSSVLTAKEA</sequence>
<dbReference type="EC" id="6.3.4.20" evidence="1"/>
<dbReference type="EMBL" id="CP000746">
    <property type="protein sequence ID" value="ABR75363.1"/>
    <property type="molecule type" value="Genomic_DNA"/>
</dbReference>
<dbReference type="RefSeq" id="WP_012073739.1">
    <property type="nucleotide sequence ID" value="NC_009655.1"/>
</dbReference>
<dbReference type="SMR" id="A6VQW6"/>
<dbReference type="STRING" id="339671.Asuc_2017"/>
<dbReference type="KEGG" id="asu:Asuc_2017"/>
<dbReference type="eggNOG" id="COG0603">
    <property type="taxonomic scope" value="Bacteria"/>
</dbReference>
<dbReference type="HOGENOM" id="CLU_081854_0_0_6"/>
<dbReference type="OrthoDB" id="9789567at2"/>
<dbReference type="UniPathway" id="UPA00391"/>
<dbReference type="Proteomes" id="UP000001114">
    <property type="component" value="Chromosome"/>
</dbReference>
<dbReference type="GO" id="GO:0005524">
    <property type="term" value="F:ATP binding"/>
    <property type="evidence" value="ECO:0007669"/>
    <property type="project" value="UniProtKB-UniRule"/>
</dbReference>
<dbReference type="GO" id="GO:0016879">
    <property type="term" value="F:ligase activity, forming carbon-nitrogen bonds"/>
    <property type="evidence" value="ECO:0007669"/>
    <property type="project" value="UniProtKB-UniRule"/>
</dbReference>
<dbReference type="GO" id="GO:0008270">
    <property type="term" value="F:zinc ion binding"/>
    <property type="evidence" value="ECO:0007669"/>
    <property type="project" value="UniProtKB-UniRule"/>
</dbReference>
<dbReference type="GO" id="GO:0008616">
    <property type="term" value="P:queuosine biosynthetic process"/>
    <property type="evidence" value="ECO:0007669"/>
    <property type="project" value="UniProtKB-UniRule"/>
</dbReference>
<dbReference type="CDD" id="cd01995">
    <property type="entry name" value="QueC-like"/>
    <property type="match status" value="1"/>
</dbReference>
<dbReference type="Gene3D" id="3.40.50.620">
    <property type="entry name" value="HUPs"/>
    <property type="match status" value="1"/>
</dbReference>
<dbReference type="HAMAP" id="MF_01633">
    <property type="entry name" value="QueC"/>
    <property type="match status" value="1"/>
</dbReference>
<dbReference type="InterPro" id="IPR018317">
    <property type="entry name" value="QueC"/>
</dbReference>
<dbReference type="InterPro" id="IPR014729">
    <property type="entry name" value="Rossmann-like_a/b/a_fold"/>
</dbReference>
<dbReference type="NCBIfam" id="TIGR00364">
    <property type="entry name" value="7-cyano-7-deazaguanine synthase QueC"/>
    <property type="match status" value="1"/>
</dbReference>
<dbReference type="PANTHER" id="PTHR42914">
    <property type="entry name" value="7-CYANO-7-DEAZAGUANINE SYNTHASE"/>
    <property type="match status" value="1"/>
</dbReference>
<dbReference type="PANTHER" id="PTHR42914:SF1">
    <property type="entry name" value="7-CYANO-7-DEAZAGUANINE SYNTHASE"/>
    <property type="match status" value="1"/>
</dbReference>
<dbReference type="Pfam" id="PF06508">
    <property type="entry name" value="QueC"/>
    <property type="match status" value="1"/>
</dbReference>
<dbReference type="PIRSF" id="PIRSF006293">
    <property type="entry name" value="ExsB"/>
    <property type="match status" value="1"/>
</dbReference>
<dbReference type="SUPFAM" id="SSF52402">
    <property type="entry name" value="Adenine nucleotide alpha hydrolases-like"/>
    <property type="match status" value="1"/>
</dbReference>
<proteinExistence type="inferred from homology"/>
<organism>
    <name type="scientific">Actinobacillus succinogenes (strain ATCC 55618 / DSM 22257 / CCUG 43843 / 130Z)</name>
    <dbReference type="NCBI Taxonomy" id="339671"/>
    <lineage>
        <taxon>Bacteria</taxon>
        <taxon>Pseudomonadati</taxon>
        <taxon>Pseudomonadota</taxon>
        <taxon>Gammaproteobacteria</taxon>
        <taxon>Pasteurellales</taxon>
        <taxon>Pasteurellaceae</taxon>
        <taxon>Actinobacillus</taxon>
    </lineage>
</organism>
<accession>A6VQW6</accession>